<proteinExistence type="evidence at protein level"/>
<gene>
    <name type="primary">XVI</name>
    <name type="synonym">S</name>
</gene>
<reference key="1">
    <citation type="journal article" date="1991" name="Virology">
        <title>Genome organization of membrane-containing bacteriophage PRD1.</title>
        <authorList>
            <person name="Bamford J.K.H."/>
            <person name="Haenninen A.-L."/>
            <person name="Pakula T.M."/>
            <person name="Ojala P.M."/>
            <person name="Kalkkinen N."/>
            <person name="Frilander M."/>
            <person name="Bamford D.H."/>
        </authorList>
    </citation>
    <scope>NUCLEOTIDE SEQUENCE [GENOMIC DNA]</scope>
    <scope>PARTIAL PROTEIN SEQUENCE</scope>
</reference>
<reference key="2">
    <citation type="journal article" date="2005" name="J. Mol. Biol.">
        <title>A snapshot of viral evolution from genome analysis of the tectiviridae family.</title>
        <authorList>
            <person name="Saren A.M."/>
            <person name="Ravantti J.J."/>
            <person name="Benson S.D."/>
            <person name="Burnett R.M."/>
            <person name="Paulin L."/>
            <person name="Bamford D.H."/>
            <person name="Bamford J.K.H."/>
        </authorList>
    </citation>
    <scope>NUCLEOTIDE SEQUENCE [GENOMIC DNA]</scope>
</reference>
<reference key="3">
    <citation type="journal article" date="2004" name="J. Virol.">
        <title>Integral membrane protein P16 of bacteriophage PRD1 stabilizes the adsorption vertex structure.</title>
        <authorList>
            <person name="Jaatinen S.T."/>
            <person name="Viitanen S.J."/>
            <person name="Bamford D.H."/>
            <person name="Bamford J.K.H."/>
        </authorList>
    </citation>
    <scope>FUNCTION</scope>
</reference>
<reference key="4">
    <citation type="journal article" date="2004" name="Nature">
        <title>Insights into assembly from structural analysis of bacteriophage PRD1.</title>
        <authorList>
            <person name="Abrescia N.G.A."/>
            <person name="Cockburn J.J.B."/>
            <person name="Grimes J.M."/>
            <person name="Sutton G.C."/>
            <person name="Diprose J.M."/>
            <person name="Butcher S.J."/>
            <person name="Fuller S.D."/>
            <person name="San Martin C."/>
            <person name="Burnett R.M."/>
            <person name="Stuart D.I."/>
            <person name="Bamford D.H."/>
            <person name="Bamford J.K.H."/>
        </authorList>
    </citation>
    <scope>X-RAY CRYSTALLOGRAPHY (4.2 ANGSTROMS)</scope>
</reference>
<name>VP16_BPPRD</name>
<protein>
    <recommendedName>
        <fullName>Protein P16</fullName>
    </recommendedName>
    <alternativeName>
        <fullName>GpS</fullName>
    </alternativeName>
    <alternativeName>
        <fullName>Protein S</fullName>
    </alternativeName>
</protein>
<dbReference type="EMBL" id="AY848689">
    <property type="protein sequence ID" value="AAX45909.1"/>
    <property type="molecule type" value="Genomic_DNA"/>
</dbReference>
<dbReference type="PIR" id="A36777">
    <property type="entry name" value="WMBPSB"/>
</dbReference>
<dbReference type="RefSeq" id="NP_040699.1">
    <property type="nucleotide sequence ID" value="NC_001421.2"/>
</dbReference>
<dbReference type="RefSeq" id="YP_009639978.1">
    <property type="nucleotide sequence ID" value="NC_001421.2"/>
</dbReference>
<dbReference type="PDB" id="1W8X">
    <property type="method" value="X-ray"/>
    <property type="resolution" value="4.20 A"/>
    <property type="chains" value="P=1-117"/>
</dbReference>
<dbReference type="PDBsum" id="1W8X"/>
<dbReference type="SMR" id="P27392"/>
<dbReference type="GeneID" id="1260929"/>
<dbReference type="OrthoDB" id="33167at10239"/>
<dbReference type="EvolutionaryTrace" id="P27392"/>
<dbReference type="Proteomes" id="UP000002143">
    <property type="component" value="Segment"/>
</dbReference>
<dbReference type="GO" id="GO:0016020">
    <property type="term" value="C:membrane"/>
    <property type="evidence" value="ECO:0007669"/>
    <property type="project" value="UniProtKB-KW"/>
</dbReference>
<dbReference type="GO" id="GO:0039641">
    <property type="term" value="C:viral inner membrane"/>
    <property type="evidence" value="ECO:0007669"/>
    <property type="project" value="UniProtKB-KW"/>
</dbReference>
<dbReference type="GO" id="GO:0055036">
    <property type="term" value="C:virion membrane"/>
    <property type="evidence" value="ECO:0007669"/>
    <property type="project" value="UniProtKB-SubCell"/>
</dbReference>
<dbReference type="DisProt" id="DP01012"/>
<dbReference type="Pfam" id="PF09301">
    <property type="entry name" value="DUF1970"/>
    <property type="match status" value="1"/>
</dbReference>
<sequence>MDKKKLLYWVGGGLVLILIWLWFRNRPAAQVASNWEGPPYMTYNQPQAGSVTLPVAGYTSPSPTLPNRNRSCGCNPAVSAAMAQGADLASKLTDSITSQLNDYASSLNDYLASQAGV</sequence>
<evidence type="ECO:0000255" key="1"/>
<evidence type="ECO:0000269" key="2">
    <source>
    </source>
</evidence>
<evidence type="ECO:0000305" key="3"/>
<organism>
    <name type="scientific">Enterobacteria phage PRD1</name>
    <name type="common">Bacteriophage PRD1</name>
    <dbReference type="NCBI Taxonomy" id="10658"/>
    <lineage>
        <taxon>Viruses</taxon>
        <taxon>Varidnaviria</taxon>
        <taxon>Bamfordvirae</taxon>
        <taxon>Preplasmiviricota</taxon>
        <taxon>Tectiliviricetes</taxon>
        <taxon>Kalamavirales</taxon>
        <taxon>Tectiviridae</taxon>
        <taxon>Alphatectivirus</taxon>
        <taxon>Alphatectivirus PRD1</taxon>
    </lineage>
</organism>
<accession>P27392</accession>
<accession>Q3T4M2</accession>
<comment type="function">
    <text evidence="2">Protein of the infection vertex complex, which increases the vertex stability. Anchors the vertex structure to the viral membrane. Essential for viral infectivity.</text>
</comment>
<comment type="subcellular location">
    <subcellularLocation>
        <location evidence="3">Virion membrane</location>
        <topology evidence="3">Single-pass membrane protein</topology>
    </subcellularLocation>
    <text evidence="3">Part of the capsid inner membrane.</text>
</comment>
<feature type="chain" id="PRO_0000165363" description="Protein P16">
    <location>
        <begin position="1"/>
        <end position="117"/>
    </location>
</feature>
<feature type="transmembrane region" description="Helical" evidence="1">
    <location>
        <begin position="7"/>
        <end position="24"/>
    </location>
</feature>
<organismHost>
    <name type="scientific">Acinetobacter calcoaceticus</name>
    <dbReference type="NCBI Taxonomy" id="471"/>
</organismHost>
<organismHost>
    <name type="scientific">Escherichia coli</name>
    <dbReference type="NCBI Taxonomy" id="562"/>
</organismHost>
<organismHost>
    <name type="scientific">Proteus mirabilis</name>
    <dbReference type="NCBI Taxonomy" id="584"/>
</organismHost>
<organismHost>
    <name type="scientific">Pseudomonas aeruginosa</name>
    <dbReference type="NCBI Taxonomy" id="287"/>
</organismHost>
<organismHost>
    <name type="scientific">Pseudomonas fluorescens</name>
    <dbReference type="NCBI Taxonomy" id="294"/>
</organismHost>
<organismHost>
    <name type="scientific">Pseudomonas putida</name>
    <name type="common">Arthrobacter siderocapsulatus</name>
    <dbReference type="NCBI Taxonomy" id="303"/>
</organismHost>
<organismHost>
    <name type="scientific">Salmonella typhimurium</name>
    <dbReference type="NCBI Taxonomy" id="90371"/>
</organismHost>
<organismHost>
    <name type="scientific">Vibrio cholerae</name>
    <dbReference type="NCBI Taxonomy" id="666"/>
</organismHost>
<keyword id="KW-0002">3D-structure</keyword>
<keyword id="KW-1231">Capsid inner membrane protein</keyword>
<keyword id="KW-0903">Direct protein sequencing</keyword>
<keyword id="KW-0472">Membrane</keyword>
<keyword id="KW-1185">Reference proteome</keyword>
<keyword id="KW-0812">Transmembrane</keyword>
<keyword id="KW-1133">Transmembrane helix</keyword>
<keyword id="KW-0946">Virion</keyword>